<evidence type="ECO:0000255" key="1">
    <source>
        <dbReference type="HAMAP-Rule" id="MF_00612"/>
    </source>
</evidence>
<protein>
    <recommendedName>
        <fullName evidence="1">UPF0225 protein YpsIP31758_1970</fullName>
    </recommendedName>
</protein>
<sequence>MSELCPCGSILNYHECCGPYILGTQVAAKPAILMRSRYCAYVEKNVDYLIATWHPDCHAQEWRESIIQGFTKTVWHGLTVIADTPGRHPDEAFVEFIARFTDADNAQITAMHERSRFLRIKEHWYYIDGIRPSLGRNDTCLCGSGKKHKKCCGR</sequence>
<organism>
    <name type="scientific">Yersinia pseudotuberculosis serotype O:1b (strain IP 31758)</name>
    <dbReference type="NCBI Taxonomy" id="349747"/>
    <lineage>
        <taxon>Bacteria</taxon>
        <taxon>Pseudomonadati</taxon>
        <taxon>Pseudomonadota</taxon>
        <taxon>Gammaproteobacteria</taxon>
        <taxon>Enterobacterales</taxon>
        <taxon>Yersiniaceae</taxon>
        <taxon>Yersinia</taxon>
    </lineage>
</organism>
<feature type="chain" id="PRO_1000061303" description="UPF0225 protein YpsIP31758_1970">
    <location>
        <begin position="1"/>
        <end position="154"/>
    </location>
</feature>
<name>Y1970_YERP3</name>
<dbReference type="EMBL" id="CP000720">
    <property type="protein sequence ID" value="ABS48745.1"/>
    <property type="molecule type" value="Genomic_DNA"/>
</dbReference>
<dbReference type="RefSeq" id="WP_012105114.1">
    <property type="nucleotide sequence ID" value="NC_009708.1"/>
</dbReference>
<dbReference type="SMR" id="A7FI67"/>
<dbReference type="KEGG" id="ypi:YpsIP31758_1970"/>
<dbReference type="HOGENOM" id="CLU_099590_0_0_6"/>
<dbReference type="Proteomes" id="UP000002412">
    <property type="component" value="Chromosome"/>
</dbReference>
<dbReference type="Gene3D" id="3.10.450.50">
    <property type="match status" value="1"/>
</dbReference>
<dbReference type="HAMAP" id="MF_00612">
    <property type="entry name" value="UPF0225"/>
    <property type="match status" value="1"/>
</dbReference>
<dbReference type="InterPro" id="IPR032710">
    <property type="entry name" value="NTF2-like_dom_sf"/>
</dbReference>
<dbReference type="InterPro" id="IPR004027">
    <property type="entry name" value="SEC_C_motif"/>
</dbReference>
<dbReference type="InterPro" id="IPR023006">
    <property type="entry name" value="UPF0225"/>
</dbReference>
<dbReference type="InterPro" id="IPR048469">
    <property type="entry name" value="YchJ-like_M"/>
</dbReference>
<dbReference type="NCBIfam" id="NF002449">
    <property type="entry name" value="PRK01617.1"/>
    <property type="match status" value="1"/>
</dbReference>
<dbReference type="NCBIfam" id="NF002486">
    <property type="entry name" value="PRK01752.1"/>
    <property type="match status" value="1"/>
</dbReference>
<dbReference type="PANTHER" id="PTHR33747:SF1">
    <property type="entry name" value="ADENYLATE CYCLASE-ASSOCIATED CAP C-TERMINAL DOMAIN-CONTAINING PROTEIN"/>
    <property type="match status" value="1"/>
</dbReference>
<dbReference type="PANTHER" id="PTHR33747">
    <property type="entry name" value="UPF0225 PROTEIN SCO1677"/>
    <property type="match status" value="1"/>
</dbReference>
<dbReference type="Pfam" id="PF02810">
    <property type="entry name" value="SEC-C"/>
    <property type="match status" value="2"/>
</dbReference>
<dbReference type="Pfam" id="PF17775">
    <property type="entry name" value="YchJ_M-like"/>
    <property type="match status" value="1"/>
</dbReference>
<dbReference type="SUPFAM" id="SSF54427">
    <property type="entry name" value="NTF2-like"/>
    <property type="match status" value="1"/>
</dbReference>
<dbReference type="SUPFAM" id="SSF103642">
    <property type="entry name" value="Sec-C motif"/>
    <property type="match status" value="1"/>
</dbReference>
<proteinExistence type="inferred from homology"/>
<comment type="similarity">
    <text evidence="1">Belongs to the UPF0225 family.</text>
</comment>
<accession>A7FI67</accession>
<reference key="1">
    <citation type="journal article" date="2007" name="PLoS Genet.">
        <title>The complete genome sequence of Yersinia pseudotuberculosis IP31758, the causative agent of Far East scarlet-like fever.</title>
        <authorList>
            <person name="Eppinger M."/>
            <person name="Rosovitz M.J."/>
            <person name="Fricke W.F."/>
            <person name="Rasko D.A."/>
            <person name="Kokorina G."/>
            <person name="Fayolle C."/>
            <person name="Lindler L.E."/>
            <person name="Carniel E."/>
            <person name="Ravel J."/>
        </authorList>
    </citation>
    <scope>NUCLEOTIDE SEQUENCE [LARGE SCALE GENOMIC DNA]</scope>
    <source>
        <strain>IP 31758</strain>
    </source>
</reference>
<gene>
    <name type="ordered locus">YpsIP31758_1970</name>
</gene>